<accession>Q2I3F2</accession>
<gene>
    <name type="primary">MT-ND4</name>
    <name type="synonym">MTND4</name>
    <name type="synonym">NADH4</name>
    <name type="synonym">ND4</name>
</gene>
<name>NU4M_LOXAF</name>
<evidence type="ECO:0000250" key="1">
    <source>
        <dbReference type="UniProtKB" id="P03905"/>
    </source>
</evidence>
<evidence type="ECO:0000250" key="2">
    <source>
        <dbReference type="UniProtKB" id="P03910"/>
    </source>
</evidence>
<evidence type="ECO:0000255" key="3"/>
<evidence type="ECO:0000305" key="4"/>
<proteinExistence type="inferred from homology"/>
<comment type="function">
    <text evidence="1">Core subunit of the mitochondrial membrane respiratory chain NADH dehydrogenase (Complex I) which catalyzes electron transfer from NADH through the respiratory chain, using ubiquinone as an electron acceptor. Essential for the catalytic activity and assembly of complex I.</text>
</comment>
<comment type="catalytic activity">
    <reaction evidence="1">
        <text>a ubiquinone + NADH + 5 H(+)(in) = a ubiquinol + NAD(+) + 4 H(+)(out)</text>
        <dbReference type="Rhea" id="RHEA:29091"/>
        <dbReference type="Rhea" id="RHEA-COMP:9565"/>
        <dbReference type="Rhea" id="RHEA-COMP:9566"/>
        <dbReference type="ChEBI" id="CHEBI:15378"/>
        <dbReference type="ChEBI" id="CHEBI:16389"/>
        <dbReference type="ChEBI" id="CHEBI:17976"/>
        <dbReference type="ChEBI" id="CHEBI:57540"/>
        <dbReference type="ChEBI" id="CHEBI:57945"/>
        <dbReference type="EC" id="7.1.1.2"/>
    </reaction>
</comment>
<comment type="subunit">
    <text evidence="2">Core subunit of respiratory chain NADH dehydrogenase (Complex I) which is composed of 45 different subunits.</text>
</comment>
<comment type="subcellular location">
    <subcellularLocation>
        <location evidence="2">Mitochondrion inner membrane</location>
        <topology evidence="3">Multi-pass membrane protein</topology>
    </subcellularLocation>
</comment>
<comment type="similarity">
    <text evidence="4">Belongs to the complex I subunit 4 family.</text>
</comment>
<geneLocation type="mitochondrion"/>
<organism>
    <name type="scientific">Loxodonta africana</name>
    <name type="common">African elephant</name>
    <dbReference type="NCBI Taxonomy" id="9785"/>
    <lineage>
        <taxon>Eukaryota</taxon>
        <taxon>Metazoa</taxon>
        <taxon>Chordata</taxon>
        <taxon>Craniata</taxon>
        <taxon>Vertebrata</taxon>
        <taxon>Euteleostomi</taxon>
        <taxon>Mammalia</taxon>
        <taxon>Eutheria</taxon>
        <taxon>Afrotheria</taxon>
        <taxon>Proboscidea</taxon>
        <taxon>Elephantidae</taxon>
        <taxon>Loxodonta</taxon>
    </lineage>
</organism>
<feature type="chain" id="PRO_0000232863" description="NADH-ubiquinone oxidoreductase chain 4">
    <location>
        <begin position="1"/>
        <end position="459"/>
    </location>
</feature>
<feature type="transmembrane region" description="Helical" evidence="3">
    <location>
        <begin position="21"/>
        <end position="43"/>
    </location>
</feature>
<feature type="transmembrane region" description="Helical" evidence="3">
    <location>
        <begin position="60"/>
        <end position="80"/>
    </location>
</feature>
<feature type="transmembrane region" description="Helical" evidence="3">
    <location>
        <begin position="99"/>
        <end position="119"/>
    </location>
</feature>
<feature type="transmembrane region" description="Helical" evidence="3">
    <location>
        <begin position="147"/>
        <end position="167"/>
    </location>
</feature>
<feature type="transmembrane region" description="Helical" evidence="3">
    <location>
        <begin position="195"/>
        <end position="215"/>
    </location>
</feature>
<feature type="transmembrane region" description="Helical" evidence="3">
    <location>
        <begin position="224"/>
        <end position="244"/>
    </location>
</feature>
<feature type="transmembrane region" description="Helical" evidence="3">
    <location>
        <begin position="257"/>
        <end position="277"/>
    </location>
</feature>
<feature type="transmembrane region" description="Helical" evidence="3">
    <location>
        <begin position="284"/>
        <end position="303"/>
    </location>
</feature>
<feature type="transmembrane region" description="Helical" evidence="3">
    <location>
        <begin position="308"/>
        <end position="330"/>
    </location>
</feature>
<feature type="transmembrane region" description="Helical" evidence="3">
    <location>
        <begin position="351"/>
        <end position="371"/>
    </location>
</feature>
<feature type="transmembrane region" description="Helical" evidence="3">
    <location>
        <begin position="375"/>
        <end position="395"/>
    </location>
</feature>
<feature type="transmembrane region" description="Helical" evidence="3">
    <location>
        <begin position="436"/>
        <end position="456"/>
    </location>
</feature>
<protein>
    <recommendedName>
        <fullName>NADH-ubiquinone oxidoreductase chain 4</fullName>
        <ecNumber evidence="1">7.1.1.2</ecNumber>
    </recommendedName>
    <alternativeName>
        <fullName>NADH dehydrogenase subunit 4</fullName>
    </alternativeName>
</protein>
<dbReference type="EC" id="7.1.1.2" evidence="1"/>
<dbReference type="EMBL" id="DQ316069">
    <property type="protein sequence ID" value="ABC17913.1"/>
    <property type="molecule type" value="Genomic_DNA"/>
</dbReference>
<dbReference type="SMR" id="Q2I3F2"/>
<dbReference type="FunCoup" id="Q2I3F2">
    <property type="interactions" value="48"/>
</dbReference>
<dbReference type="STRING" id="9785.ENSLAFP00000029500"/>
<dbReference type="eggNOG" id="KOG4845">
    <property type="taxonomic scope" value="Eukaryota"/>
</dbReference>
<dbReference type="InParanoid" id="Q2I3F2"/>
<dbReference type="Proteomes" id="UP000007646">
    <property type="component" value="Unassembled WGS sequence"/>
</dbReference>
<dbReference type="GO" id="GO:0005743">
    <property type="term" value="C:mitochondrial inner membrane"/>
    <property type="evidence" value="ECO:0000250"/>
    <property type="project" value="UniProtKB"/>
</dbReference>
<dbReference type="GO" id="GO:0008137">
    <property type="term" value="F:NADH dehydrogenase (ubiquinone) activity"/>
    <property type="evidence" value="ECO:0000250"/>
    <property type="project" value="UniProtKB"/>
</dbReference>
<dbReference type="GO" id="GO:0048039">
    <property type="term" value="F:ubiquinone binding"/>
    <property type="evidence" value="ECO:0007669"/>
    <property type="project" value="TreeGrafter"/>
</dbReference>
<dbReference type="GO" id="GO:0015990">
    <property type="term" value="P:electron transport coupled proton transport"/>
    <property type="evidence" value="ECO:0007669"/>
    <property type="project" value="TreeGrafter"/>
</dbReference>
<dbReference type="GO" id="GO:0006120">
    <property type="term" value="P:mitochondrial electron transport, NADH to ubiquinone"/>
    <property type="evidence" value="ECO:0000250"/>
    <property type="project" value="UniProtKB"/>
</dbReference>
<dbReference type="GO" id="GO:0032981">
    <property type="term" value="P:mitochondrial respiratory chain complex I assembly"/>
    <property type="evidence" value="ECO:0000250"/>
    <property type="project" value="UniProtKB"/>
</dbReference>
<dbReference type="InterPro" id="IPR000260">
    <property type="entry name" value="NADH4_N"/>
</dbReference>
<dbReference type="InterPro" id="IPR010227">
    <property type="entry name" value="NADH_Q_OxRdtase_chainM/4"/>
</dbReference>
<dbReference type="InterPro" id="IPR003918">
    <property type="entry name" value="NADH_UbQ_OxRdtase"/>
</dbReference>
<dbReference type="InterPro" id="IPR001750">
    <property type="entry name" value="ND/Mrp_TM"/>
</dbReference>
<dbReference type="NCBIfam" id="TIGR01972">
    <property type="entry name" value="NDH_I_M"/>
    <property type="match status" value="1"/>
</dbReference>
<dbReference type="PANTHER" id="PTHR43507">
    <property type="entry name" value="NADH-UBIQUINONE OXIDOREDUCTASE CHAIN 4"/>
    <property type="match status" value="1"/>
</dbReference>
<dbReference type="PANTHER" id="PTHR43507:SF20">
    <property type="entry name" value="NADH-UBIQUINONE OXIDOREDUCTASE CHAIN 4"/>
    <property type="match status" value="1"/>
</dbReference>
<dbReference type="Pfam" id="PF01059">
    <property type="entry name" value="Oxidored_q5_N"/>
    <property type="match status" value="1"/>
</dbReference>
<dbReference type="Pfam" id="PF00361">
    <property type="entry name" value="Proton_antipo_M"/>
    <property type="match status" value="1"/>
</dbReference>
<dbReference type="PRINTS" id="PR01437">
    <property type="entry name" value="NUOXDRDTASE4"/>
</dbReference>
<keyword id="KW-0249">Electron transport</keyword>
<keyword id="KW-0472">Membrane</keyword>
<keyword id="KW-0496">Mitochondrion</keyword>
<keyword id="KW-0999">Mitochondrion inner membrane</keyword>
<keyword id="KW-0520">NAD</keyword>
<keyword id="KW-1185">Reference proteome</keyword>
<keyword id="KW-0679">Respiratory chain</keyword>
<keyword id="KW-1278">Translocase</keyword>
<keyword id="KW-0812">Transmembrane</keyword>
<keyword id="KW-1133">Transmembrane helix</keyword>
<keyword id="KW-0813">Transport</keyword>
<keyword id="KW-0830">Ubiquinone</keyword>
<reference key="1">
    <citation type="journal article" date="2006" name="PLoS Biol.">
        <title>Complete mitochondrial genome and phylogeny of Pleistocene mammoth Mammuthus primigenius.</title>
        <authorList>
            <person name="Rogaev E.I."/>
            <person name="Moliaka Y.K."/>
            <person name="Malyarchuk B.A."/>
            <person name="Kondrashov F.A."/>
            <person name="Derenko M.V."/>
            <person name="Chumakov I."/>
            <person name="Grigorenko A.P."/>
        </authorList>
    </citation>
    <scope>NUCLEOTIDE SEQUENCE [GENOMIC DNA]</scope>
    <source>
        <tissue>Blood</tissue>
    </source>
</reference>
<sequence length="459" mass="51807">MLKTILPTIMLIPLAWFTSNNMVWINTTLYSFTISLTSLHLLYQPLDNSLNLSPEFFLDSLSTPLLILTIWLLPLMLIASQSHLSSGSTFQKKSYITTIILLQVSLIMTFAATDLILLYIMFETTLIPTMVIITRWGNQLERLNAGSYFLFYTLMGSLPLLVTLMLIQNTLGSLNLMMLPYLIKPIDNLWSTNMLWLTCTMAFMVKMPLYGLHLWLPKAHVEAPIAGSMVLAAILLKLGGYGMLRITILLDPLTTHMYYPFLMLSLWGMVMSSSICLRQTDMKSLIAYSSVSHMALVIIAIMLQTPWSFMGALTLMIAHGLTSSMLFCLANSNYERIHNRTMILARGLQTLLPLMATWWLLASLINMAPPPTINLIGELLIITTSFSWSNFTIFPMGLNVLITTMYTLHMMTTTQRGKTSHHAKSIKPSFTRENTLMALHFLPLLLLSLNPKIILGLTY</sequence>